<sequence length="269" mass="30510">MSNKVHLGHTARKRFGQNFLTDSNVINRIVGAISPDNDHVMVEIGPGLAALTEPVAESIDKLTVVELDKDLVERLQTHPFLKDKLEIHQGDALKFDFKQLVEEGKQMKVFGNLPYNISTPLMFHLFEFAEHIENMHFMLQKEVVLRLSAAPGTKAYGRLTVMAQYFCQVMPVLEVPPGCFTPPPKVDSAVVRLVPYKEKPYPCKDVDLLRHLCTTAFNMRRKTLRNNLKQLLNDDDFSALGIDASMRPEQITVQQYVAMANHLVDKRQA</sequence>
<keyword id="KW-0963">Cytoplasm</keyword>
<keyword id="KW-0489">Methyltransferase</keyword>
<keyword id="KW-1185">Reference proteome</keyword>
<keyword id="KW-0694">RNA-binding</keyword>
<keyword id="KW-0698">rRNA processing</keyword>
<keyword id="KW-0949">S-adenosyl-L-methionine</keyword>
<keyword id="KW-0808">Transferase</keyword>
<gene>
    <name evidence="1" type="primary">rsmA</name>
    <name evidence="1" type="synonym">ksgA</name>
    <name type="ordered locus">Shew_0879</name>
</gene>
<feature type="chain" id="PRO_1000056670" description="Ribosomal RNA small subunit methyltransferase A">
    <location>
        <begin position="1"/>
        <end position="269"/>
    </location>
</feature>
<feature type="binding site" evidence="1">
    <location>
        <position position="18"/>
    </location>
    <ligand>
        <name>S-adenosyl-L-methionine</name>
        <dbReference type="ChEBI" id="CHEBI:59789"/>
    </ligand>
</feature>
<feature type="binding site" evidence="1">
    <location>
        <position position="20"/>
    </location>
    <ligand>
        <name>S-adenosyl-L-methionine</name>
        <dbReference type="ChEBI" id="CHEBI:59789"/>
    </ligand>
</feature>
<feature type="binding site" evidence="1">
    <location>
        <position position="45"/>
    </location>
    <ligand>
        <name>S-adenosyl-L-methionine</name>
        <dbReference type="ChEBI" id="CHEBI:59789"/>
    </ligand>
</feature>
<feature type="binding site" evidence="1">
    <location>
        <position position="66"/>
    </location>
    <ligand>
        <name>S-adenosyl-L-methionine</name>
        <dbReference type="ChEBI" id="CHEBI:59789"/>
    </ligand>
</feature>
<feature type="binding site" evidence="1">
    <location>
        <position position="91"/>
    </location>
    <ligand>
        <name>S-adenosyl-L-methionine</name>
        <dbReference type="ChEBI" id="CHEBI:59789"/>
    </ligand>
</feature>
<feature type="binding site" evidence="1">
    <location>
        <position position="112"/>
    </location>
    <ligand>
        <name>S-adenosyl-L-methionine</name>
        <dbReference type="ChEBI" id="CHEBI:59789"/>
    </ligand>
</feature>
<proteinExistence type="inferred from homology"/>
<dbReference type="EC" id="2.1.1.182" evidence="1"/>
<dbReference type="EMBL" id="CP000606">
    <property type="protein sequence ID" value="ABO22751.1"/>
    <property type="molecule type" value="Genomic_DNA"/>
</dbReference>
<dbReference type="RefSeq" id="WP_011864685.1">
    <property type="nucleotide sequence ID" value="NC_009092.1"/>
</dbReference>
<dbReference type="SMR" id="A3QBA3"/>
<dbReference type="STRING" id="323850.Shew_0879"/>
<dbReference type="KEGG" id="slo:Shew_0879"/>
<dbReference type="eggNOG" id="COG0030">
    <property type="taxonomic scope" value="Bacteria"/>
</dbReference>
<dbReference type="HOGENOM" id="CLU_041220_0_1_6"/>
<dbReference type="OrthoDB" id="9814755at2"/>
<dbReference type="Proteomes" id="UP000001558">
    <property type="component" value="Chromosome"/>
</dbReference>
<dbReference type="GO" id="GO:0005829">
    <property type="term" value="C:cytosol"/>
    <property type="evidence" value="ECO:0007669"/>
    <property type="project" value="TreeGrafter"/>
</dbReference>
<dbReference type="GO" id="GO:0052908">
    <property type="term" value="F:16S rRNA (adenine(1518)-N(6)/adenine(1519)-N(6))-dimethyltransferase activity"/>
    <property type="evidence" value="ECO:0007669"/>
    <property type="project" value="UniProtKB-EC"/>
</dbReference>
<dbReference type="GO" id="GO:0003723">
    <property type="term" value="F:RNA binding"/>
    <property type="evidence" value="ECO:0007669"/>
    <property type="project" value="UniProtKB-KW"/>
</dbReference>
<dbReference type="FunFam" id="1.10.8.100:FF:000001">
    <property type="entry name" value="Ribosomal RNA small subunit methyltransferase A"/>
    <property type="match status" value="1"/>
</dbReference>
<dbReference type="FunFam" id="3.40.50.150:FF:000006">
    <property type="entry name" value="Ribosomal RNA small subunit methyltransferase A"/>
    <property type="match status" value="1"/>
</dbReference>
<dbReference type="Gene3D" id="1.10.8.100">
    <property type="entry name" value="Ribosomal RNA adenine dimethylase-like, domain 2"/>
    <property type="match status" value="1"/>
</dbReference>
<dbReference type="Gene3D" id="3.40.50.150">
    <property type="entry name" value="Vaccinia Virus protein VP39"/>
    <property type="match status" value="1"/>
</dbReference>
<dbReference type="HAMAP" id="MF_00607">
    <property type="entry name" value="16SrRNA_methyltr_A"/>
    <property type="match status" value="1"/>
</dbReference>
<dbReference type="InterPro" id="IPR001737">
    <property type="entry name" value="KsgA/Erm"/>
</dbReference>
<dbReference type="InterPro" id="IPR023165">
    <property type="entry name" value="rRNA_Ade_diMease-like_C"/>
</dbReference>
<dbReference type="InterPro" id="IPR020596">
    <property type="entry name" value="rRNA_Ade_Mease_Trfase_CS"/>
</dbReference>
<dbReference type="InterPro" id="IPR020598">
    <property type="entry name" value="rRNA_Ade_methylase_Trfase_N"/>
</dbReference>
<dbReference type="InterPro" id="IPR011530">
    <property type="entry name" value="rRNA_adenine_dimethylase"/>
</dbReference>
<dbReference type="InterPro" id="IPR029063">
    <property type="entry name" value="SAM-dependent_MTases_sf"/>
</dbReference>
<dbReference type="NCBIfam" id="TIGR00755">
    <property type="entry name" value="ksgA"/>
    <property type="match status" value="1"/>
</dbReference>
<dbReference type="PANTHER" id="PTHR11727">
    <property type="entry name" value="DIMETHYLADENOSINE TRANSFERASE"/>
    <property type="match status" value="1"/>
</dbReference>
<dbReference type="PANTHER" id="PTHR11727:SF7">
    <property type="entry name" value="DIMETHYLADENOSINE TRANSFERASE-RELATED"/>
    <property type="match status" value="1"/>
</dbReference>
<dbReference type="Pfam" id="PF00398">
    <property type="entry name" value="RrnaAD"/>
    <property type="match status" value="1"/>
</dbReference>
<dbReference type="SMART" id="SM00650">
    <property type="entry name" value="rADc"/>
    <property type="match status" value="1"/>
</dbReference>
<dbReference type="SUPFAM" id="SSF53335">
    <property type="entry name" value="S-adenosyl-L-methionine-dependent methyltransferases"/>
    <property type="match status" value="1"/>
</dbReference>
<dbReference type="PROSITE" id="PS01131">
    <property type="entry name" value="RRNA_A_DIMETH"/>
    <property type="match status" value="1"/>
</dbReference>
<dbReference type="PROSITE" id="PS51689">
    <property type="entry name" value="SAM_RNA_A_N6_MT"/>
    <property type="match status" value="1"/>
</dbReference>
<reference key="1">
    <citation type="submission" date="2007-03" db="EMBL/GenBank/DDBJ databases">
        <title>Complete sequence of Shewanella loihica PV-4.</title>
        <authorList>
            <consortium name="US DOE Joint Genome Institute"/>
            <person name="Copeland A."/>
            <person name="Lucas S."/>
            <person name="Lapidus A."/>
            <person name="Barry K."/>
            <person name="Detter J.C."/>
            <person name="Glavina del Rio T."/>
            <person name="Hammon N."/>
            <person name="Israni S."/>
            <person name="Dalin E."/>
            <person name="Tice H."/>
            <person name="Pitluck S."/>
            <person name="Chain P."/>
            <person name="Malfatti S."/>
            <person name="Shin M."/>
            <person name="Vergez L."/>
            <person name="Schmutz J."/>
            <person name="Larimer F."/>
            <person name="Land M."/>
            <person name="Hauser L."/>
            <person name="Kyrpides N."/>
            <person name="Mikhailova N."/>
            <person name="Romine M.F."/>
            <person name="Serres G."/>
            <person name="Fredrickson J."/>
            <person name="Tiedje J."/>
            <person name="Richardson P."/>
        </authorList>
    </citation>
    <scope>NUCLEOTIDE SEQUENCE [LARGE SCALE GENOMIC DNA]</scope>
    <source>
        <strain>ATCC BAA-1088 / PV-4</strain>
    </source>
</reference>
<organism>
    <name type="scientific">Shewanella loihica (strain ATCC BAA-1088 / PV-4)</name>
    <dbReference type="NCBI Taxonomy" id="323850"/>
    <lineage>
        <taxon>Bacteria</taxon>
        <taxon>Pseudomonadati</taxon>
        <taxon>Pseudomonadota</taxon>
        <taxon>Gammaproteobacteria</taxon>
        <taxon>Alteromonadales</taxon>
        <taxon>Shewanellaceae</taxon>
        <taxon>Shewanella</taxon>
    </lineage>
</organism>
<evidence type="ECO:0000255" key="1">
    <source>
        <dbReference type="HAMAP-Rule" id="MF_00607"/>
    </source>
</evidence>
<accession>A3QBA3</accession>
<protein>
    <recommendedName>
        <fullName evidence="1">Ribosomal RNA small subunit methyltransferase A</fullName>
        <ecNumber evidence="1">2.1.1.182</ecNumber>
    </recommendedName>
    <alternativeName>
        <fullName evidence="1">16S rRNA (adenine(1518)-N(6)/adenine(1519)-N(6))-dimethyltransferase</fullName>
    </alternativeName>
    <alternativeName>
        <fullName evidence="1">16S rRNA dimethyladenosine transferase</fullName>
    </alternativeName>
    <alternativeName>
        <fullName evidence="1">16S rRNA dimethylase</fullName>
    </alternativeName>
    <alternativeName>
        <fullName evidence="1">S-adenosylmethionine-6-N', N'-adenosyl(rRNA) dimethyltransferase</fullName>
    </alternativeName>
</protein>
<comment type="function">
    <text evidence="1">Specifically dimethylates two adjacent adenosines (A1518 and A1519) in the loop of a conserved hairpin near the 3'-end of 16S rRNA in the 30S particle. May play a critical role in biogenesis of 30S subunits.</text>
</comment>
<comment type="catalytic activity">
    <reaction evidence="1">
        <text>adenosine(1518)/adenosine(1519) in 16S rRNA + 4 S-adenosyl-L-methionine = N(6)-dimethyladenosine(1518)/N(6)-dimethyladenosine(1519) in 16S rRNA + 4 S-adenosyl-L-homocysteine + 4 H(+)</text>
        <dbReference type="Rhea" id="RHEA:19609"/>
        <dbReference type="Rhea" id="RHEA-COMP:10232"/>
        <dbReference type="Rhea" id="RHEA-COMP:10233"/>
        <dbReference type="ChEBI" id="CHEBI:15378"/>
        <dbReference type="ChEBI" id="CHEBI:57856"/>
        <dbReference type="ChEBI" id="CHEBI:59789"/>
        <dbReference type="ChEBI" id="CHEBI:74411"/>
        <dbReference type="ChEBI" id="CHEBI:74493"/>
        <dbReference type="EC" id="2.1.1.182"/>
    </reaction>
</comment>
<comment type="subcellular location">
    <subcellularLocation>
        <location evidence="1">Cytoplasm</location>
    </subcellularLocation>
</comment>
<comment type="similarity">
    <text evidence="1">Belongs to the class I-like SAM-binding methyltransferase superfamily. rRNA adenine N(6)-methyltransferase family. RsmA subfamily.</text>
</comment>
<name>RSMA_SHELP</name>